<comment type="catalytic activity">
    <reaction>
        <text>L-seryl-[protein] + ATP = O-phospho-L-seryl-[protein] + ADP + H(+)</text>
        <dbReference type="Rhea" id="RHEA:17989"/>
        <dbReference type="Rhea" id="RHEA-COMP:9863"/>
        <dbReference type="Rhea" id="RHEA-COMP:11604"/>
        <dbReference type="ChEBI" id="CHEBI:15378"/>
        <dbReference type="ChEBI" id="CHEBI:29999"/>
        <dbReference type="ChEBI" id="CHEBI:30616"/>
        <dbReference type="ChEBI" id="CHEBI:83421"/>
        <dbReference type="ChEBI" id="CHEBI:456216"/>
        <dbReference type="EC" id="2.7.11.24"/>
    </reaction>
</comment>
<comment type="catalytic activity">
    <reaction>
        <text>L-threonyl-[protein] + ATP = O-phospho-L-threonyl-[protein] + ADP + H(+)</text>
        <dbReference type="Rhea" id="RHEA:46608"/>
        <dbReference type="Rhea" id="RHEA-COMP:11060"/>
        <dbReference type="Rhea" id="RHEA-COMP:11605"/>
        <dbReference type="ChEBI" id="CHEBI:15378"/>
        <dbReference type="ChEBI" id="CHEBI:30013"/>
        <dbReference type="ChEBI" id="CHEBI:30616"/>
        <dbReference type="ChEBI" id="CHEBI:61977"/>
        <dbReference type="ChEBI" id="CHEBI:456216"/>
        <dbReference type="EC" id="2.7.11.24"/>
    </reaction>
</comment>
<comment type="cofactor">
    <cofactor evidence="1">
        <name>Mg(2+)</name>
        <dbReference type="ChEBI" id="CHEBI:18420"/>
    </cofactor>
</comment>
<comment type="activity regulation">
    <text evidence="1">Activated by tyrosine and threonine phosphorylation.</text>
</comment>
<comment type="tissue specificity">
    <text>Ubiquitous.</text>
</comment>
<comment type="developmental stage">
    <text>Detected during gametophytic pollen development and constitutively expressed in embryogenic pollen.</text>
</comment>
<comment type="domain">
    <text>The TXY motif contains the threonine and tyrosine residues whose phosphorylation activates the MAP kinases.</text>
</comment>
<comment type="PTM">
    <text evidence="1">Dually phosphorylated on Thr-191 and Tyr-193, which activates the enzyme (By similarity). Very low autophosphorylation, although dramatically increased when Mn(2+) is added to the reaction instead of Mg(2+).</text>
</comment>
<comment type="similarity">
    <text evidence="5">Belongs to the protein kinase superfamily. CMGC Ser/Thr protein kinase family. MAP kinase subfamily.</text>
</comment>
<reference key="1">
    <citation type="journal article" date="1993" name="Plant Mol. Biol.">
        <title>Isolation and characterization of a tobacco cDNA clone encoding a putative MAP kinase.</title>
        <authorList>
            <person name="Wilson C."/>
            <person name="Eller N."/>
            <person name="Gartner A."/>
            <person name="Vicente O."/>
            <person name="Heberle-Bors E."/>
        </authorList>
    </citation>
    <scope>NUCLEOTIDE SEQUENCE [MRNA]</scope>
    <source>
        <strain>cv. Petit Havana SR1</strain>
    </source>
</reference>
<reference key="2">
    <citation type="journal article" date="1995" name="Eur. J. Biochem.">
        <title>Molecular cloning, functional expression in Escherichia coli, and characterization of multiple mitogen-activated-protein kinases from tobacco.</title>
        <authorList>
            <person name="Wilson C."/>
            <person name="Anglmayer R."/>
            <person name="Vicente O."/>
            <person name="Heberle-Bors E."/>
        </authorList>
    </citation>
    <scope>MUTAGENESIS</scope>
    <source>
        <strain>cv. Petit Havana SR1</strain>
    </source>
</reference>
<dbReference type="EC" id="2.7.11.24"/>
<dbReference type="EMBL" id="X69971">
    <property type="protein sequence ID" value="CAA49592.1"/>
    <property type="molecule type" value="mRNA"/>
</dbReference>
<dbReference type="PIR" id="S39559">
    <property type="entry name" value="S39559"/>
</dbReference>
<dbReference type="SMR" id="Q40517"/>
<dbReference type="STRING" id="4097.Q40517"/>
<dbReference type="PaxDb" id="4097-Q40517"/>
<dbReference type="BRENDA" id="2.7.11.24">
    <property type="organism ID" value="3645"/>
</dbReference>
<dbReference type="Proteomes" id="UP000084051">
    <property type="component" value="Unplaced"/>
</dbReference>
<dbReference type="GO" id="GO:0005737">
    <property type="term" value="C:cytoplasm"/>
    <property type="evidence" value="ECO:0000318"/>
    <property type="project" value="GO_Central"/>
</dbReference>
<dbReference type="GO" id="GO:0005634">
    <property type="term" value="C:nucleus"/>
    <property type="evidence" value="ECO:0000318"/>
    <property type="project" value="GO_Central"/>
</dbReference>
<dbReference type="GO" id="GO:0005524">
    <property type="term" value="F:ATP binding"/>
    <property type="evidence" value="ECO:0007669"/>
    <property type="project" value="UniProtKB-KW"/>
</dbReference>
<dbReference type="GO" id="GO:0004707">
    <property type="term" value="F:MAP kinase activity"/>
    <property type="evidence" value="ECO:0007669"/>
    <property type="project" value="UniProtKB-EC"/>
</dbReference>
<dbReference type="GO" id="GO:0106310">
    <property type="term" value="F:protein serine kinase activity"/>
    <property type="evidence" value="ECO:0007669"/>
    <property type="project" value="RHEA"/>
</dbReference>
<dbReference type="GO" id="GO:0004674">
    <property type="term" value="F:protein serine/threonine kinase activity"/>
    <property type="evidence" value="ECO:0000318"/>
    <property type="project" value="GO_Central"/>
</dbReference>
<dbReference type="GO" id="GO:0035556">
    <property type="term" value="P:intracellular signal transduction"/>
    <property type="evidence" value="ECO:0000318"/>
    <property type="project" value="GO_Central"/>
</dbReference>
<dbReference type="CDD" id="cd07858">
    <property type="entry name" value="STKc_TEY_MAPK"/>
    <property type="match status" value="1"/>
</dbReference>
<dbReference type="FunFam" id="1.10.510.10:FF:000206">
    <property type="entry name" value="Mitogen-activated protein kinase"/>
    <property type="match status" value="1"/>
</dbReference>
<dbReference type="FunFam" id="3.30.200.20:FF:000046">
    <property type="entry name" value="Mitogen-activated protein kinase"/>
    <property type="match status" value="1"/>
</dbReference>
<dbReference type="Gene3D" id="3.30.200.20">
    <property type="entry name" value="Phosphorylase Kinase, domain 1"/>
    <property type="match status" value="1"/>
</dbReference>
<dbReference type="Gene3D" id="1.10.510.10">
    <property type="entry name" value="Transferase(Phosphotransferase) domain 1"/>
    <property type="match status" value="1"/>
</dbReference>
<dbReference type="InterPro" id="IPR011009">
    <property type="entry name" value="Kinase-like_dom_sf"/>
</dbReference>
<dbReference type="InterPro" id="IPR050117">
    <property type="entry name" value="MAP_kinase"/>
</dbReference>
<dbReference type="InterPro" id="IPR003527">
    <property type="entry name" value="MAP_kinase_CS"/>
</dbReference>
<dbReference type="InterPro" id="IPR000719">
    <property type="entry name" value="Prot_kinase_dom"/>
</dbReference>
<dbReference type="InterPro" id="IPR017441">
    <property type="entry name" value="Protein_kinase_ATP_BS"/>
</dbReference>
<dbReference type="InterPro" id="IPR008271">
    <property type="entry name" value="Ser/Thr_kinase_AS"/>
</dbReference>
<dbReference type="PANTHER" id="PTHR24055">
    <property type="entry name" value="MITOGEN-ACTIVATED PROTEIN KINASE"/>
    <property type="match status" value="1"/>
</dbReference>
<dbReference type="Pfam" id="PF00069">
    <property type="entry name" value="Pkinase"/>
    <property type="match status" value="1"/>
</dbReference>
<dbReference type="SMART" id="SM00220">
    <property type="entry name" value="S_TKc"/>
    <property type="match status" value="1"/>
</dbReference>
<dbReference type="SUPFAM" id="SSF56112">
    <property type="entry name" value="Protein kinase-like (PK-like)"/>
    <property type="match status" value="1"/>
</dbReference>
<dbReference type="PROSITE" id="PS01351">
    <property type="entry name" value="MAPK"/>
    <property type="match status" value="1"/>
</dbReference>
<dbReference type="PROSITE" id="PS00107">
    <property type="entry name" value="PROTEIN_KINASE_ATP"/>
    <property type="match status" value="1"/>
</dbReference>
<dbReference type="PROSITE" id="PS50011">
    <property type="entry name" value="PROTEIN_KINASE_DOM"/>
    <property type="match status" value="1"/>
</dbReference>
<dbReference type="PROSITE" id="PS00108">
    <property type="entry name" value="PROTEIN_KINASE_ST"/>
    <property type="match status" value="1"/>
</dbReference>
<protein>
    <recommendedName>
        <fullName>Mitogen-activated protein kinase homolog NTF3</fullName>
        <ecNumber>2.7.11.24</ecNumber>
    </recommendedName>
    <alternativeName>
        <fullName>P43</fullName>
    </alternativeName>
</protein>
<organism>
    <name type="scientific">Nicotiana tabacum</name>
    <name type="common">Common tobacco</name>
    <dbReference type="NCBI Taxonomy" id="4097"/>
    <lineage>
        <taxon>Eukaryota</taxon>
        <taxon>Viridiplantae</taxon>
        <taxon>Streptophyta</taxon>
        <taxon>Embryophyta</taxon>
        <taxon>Tracheophyta</taxon>
        <taxon>Spermatophyta</taxon>
        <taxon>Magnoliopsida</taxon>
        <taxon>eudicotyledons</taxon>
        <taxon>Gunneridae</taxon>
        <taxon>Pentapetalae</taxon>
        <taxon>asterids</taxon>
        <taxon>lamiids</taxon>
        <taxon>Solanales</taxon>
        <taxon>Solanaceae</taxon>
        <taxon>Nicotianoideae</taxon>
        <taxon>Nicotianeae</taxon>
        <taxon>Nicotiana</taxon>
    </lineage>
</organism>
<accession>Q40517</accession>
<feature type="chain" id="PRO_0000186321" description="Mitogen-activated protein kinase homolog NTF3">
    <location>
        <begin position="1"/>
        <end position="372"/>
    </location>
</feature>
<feature type="domain" description="Protein kinase" evidence="2">
    <location>
        <begin position="32"/>
        <end position="319"/>
    </location>
</feature>
<feature type="short sequence motif" description="TXY">
    <location>
        <begin position="191"/>
        <end position="193"/>
    </location>
</feature>
<feature type="active site" description="Proton acceptor" evidence="2 3">
    <location>
        <position position="158"/>
    </location>
</feature>
<feature type="binding site" evidence="2">
    <location>
        <begin position="38"/>
        <end position="46"/>
    </location>
    <ligand>
        <name>ATP</name>
        <dbReference type="ChEBI" id="CHEBI:30616"/>
    </ligand>
</feature>
<feature type="binding site" evidence="5">
    <location>
        <position position="61"/>
    </location>
    <ligand>
        <name>ATP</name>
        <dbReference type="ChEBI" id="CHEBI:30616"/>
    </ligand>
</feature>
<feature type="modified residue" description="Phosphothreonine" evidence="1">
    <location>
        <position position="191"/>
    </location>
</feature>
<feature type="modified residue" description="Phosphotyrosine" evidence="1">
    <location>
        <position position="193"/>
    </location>
</feature>
<feature type="mutagenesis site" description="Inactivation." evidence="4">
    <original>K</original>
    <variation>R</variation>
    <location>
        <position position="61"/>
    </location>
</feature>
<keyword id="KW-0067">ATP-binding</keyword>
<keyword id="KW-0418">Kinase</keyword>
<keyword id="KW-0547">Nucleotide-binding</keyword>
<keyword id="KW-0597">Phosphoprotein</keyword>
<keyword id="KW-1185">Reference proteome</keyword>
<keyword id="KW-0723">Serine/threonine-protein kinase</keyword>
<keyword id="KW-0808">Transferase</keyword>
<sequence>MATPVEPPNGIRTPGKHYYSMWQSLFEIDTKYVPIKPIGRGAYGIVCSSVNRETNEKVAIKKINNAFENRIDALRTLRELKLLRHLRHENVIALKDVMMPIHRRSFKDVYLVYELMDTDLHQIIKSSQTLSNDHCQYFLFQLLRGLKYLHSANILHRDLKPGNLLINANCDLKICDFGLARTSSGKDQFMTEYVVTRWYRAPELLLCCDNYGTSIDVWSVGCIFAELLGRKPVFPGTECLNQLKLIINILGSQREEDIEFIDNPKARKYIKSLPYSPGTPFSRLYPHAHPLAIDLLQRMLVFDPSKRISVIEALQHPYMSPLYDPNTDPPAQVPINLDIDEDLGEETIREMMWSEILEYHPEAATAAMEVVL</sequence>
<name>NTF3_TOBAC</name>
<gene>
    <name type="primary">NTF3</name>
</gene>
<evidence type="ECO:0000250" key="1"/>
<evidence type="ECO:0000255" key="2">
    <source>
        <dbReference type="PROSITE-ProRule" id="PRU00159"/>
    </source>
</evidence>
<evidence type="ECO:0000255" key="3">
    <source>
        <dbReference type="PROSITE-ProRule" id="PRU10027"/>
    </source>
</evidence>
<evidence type="ECO:0000269" key="4">
    <source>
    </source>
</evidence>
<evidence type="ECO:0000305" key="5"/>
<proteinExistence type="evidence at protein level"/>